<name>ADE_PSEPW</name>
<keyword id="KW-0378">Hydrolase</keyword>
<keyword id="KW-0479">Metal-binding</keyword>
<keyword id="KW-0546">Nucleotide metabolism</keyword>
<keyword id="KW-0862">Zinc</keyword>
<dbReference type="EC" id="3.5.4.2" evidence="1"/>
<dbReference type="EMBL" id="CP000949">
    <property type="protein sequence ID" value="ACA75052.1"/>
    <property type="molecule type" value="Genomic_DNA"/>
</dbReference>
<dbReference type="SMR" id="B1JFB0"/>
<dbReference type="STRING" id="390235.PputW619_4572"/>
<dbReference type="KEGG" id="ppw:PputW619_4572"/>
<dbReference type="eggNOG" id="COG1816">
    <property type="taxonomic scope" value="Bacteria"/>
</dbReference>
<dbReference type="HOGENOM" id="CLU_039228_7_0_6"/>
<dbReference type="OrthoDB" id="105475at2"/>
<dbReference type="GO" id="GO:0005829">
    <property type="term" value="C:cytosol"/>
    <property type="evidence" value="ECO:0007669"/>
    <property type="project" value="TreeGrafter"/>
</dbReference>
<dbReference type="GO" id="GO:0000034">
    <property type="term" value="F:adenine deaminase activity"/>
    <property type="evidence" value="ECO:0007669"/>
    <property type="project" value="UniProtKB-UniRule"/>
</dbReference>
<dbReference type="GO" id="GO:0008270">
    <property type="term" value="F:zinc ion binding"/>
    <property type="evidence" value="ECO:0007669"/>
    <property type="project" value="UniProtKB-UniRule"/>
</dbReference>
<dbReference type="GO" id="GO:0006146">
    <property type="term" value="P:adenine catabolic process"/>
    <property type="evidence" value="ECO:0007669"/>
    <property type="project" value="UniProtKB-UniRule"/>
</dbReference>
<dbReference type="GO" id="GO:0043103">
    <property type="term" value="P:hypoxanthine salvage"/>
    <property type="evidence" value="ECO:0007669"/>
    <property type="project" value="UniProtKB-UniRule"/>
</dbReference>
<dbReference type="GO" id="GO:0009117">
    <property type="term" value="P:nucleotide metabolic process"/>
    <property type="evidence" value="ECO:0007669"/>
    <property type="project" value="UniProtKB-KW"/>
</dbReference>
<dbReference type="CDD" id="cd01320">
    <property type="entry name" value="ADA"/>
    <property type="match status" value="1"/>
</dbReference>
<dbReference type="FunFam" id="3.20.20.140:FF:000039">
    <property type="entry name" value="Adenine deaminase"/>
    <property type="match status" value="1"/>
</dbReference>
<dbReference type="Gene3D" id="3.20.20.140">
    <property type="entry name" value="Metal-dependent hydrolases"/>
    <property type="match status" value="1"/>
</dbReference>
<dbReference type="HAMAP" id="MF_01962">
    <property type="entry name" value="Adenine_deaminase"/>
    <property type="match status" value="1"/>
</dbReference>
<dbReference type="InterPro" id="IPR001365">
    <property type="entry name" value="A_deaminase_dom"/>
</dbReference>
<dbReference type="InterPro" id="IPR028892">
    <property type="entry name" value="ADE"/>
</dbReference>
<dbReference type="InterPro" id="IPR006330">
    <property type="entry name" value="Ado/ade_deaminase"/>
</dbReference>
<dbReference type="InterPro" id="IPR032466">
    <property type="entry name" value="Metal_Hydrolase"/>
</dbReference>
<dbReference type="NCBIfam" id="TIGR01430">
    <property type="entry name" value="aden_deam"/>
    <property type="match status" value="1"/>
</dbReference>
<dbReference type="NCBIfam" id="NF006850">
    <property type="entry name" value="PRK09358.1-6"/>
    <property type="match status" value="1"/>
</dbReference>
<dbReference type="PANTHER" id="PTHR43114">
    <property type="entry name" value="ADENINE DEAMINASE"/>
    <property type="match status" value="1"/>
</dbReference>
<dbReference type="PANTHER" id="PTHR43114:SF6">
    <property type="entry name" value="ADENINE DEAMINASE"/>
    <property type="match status" value="1"/>
</dbReference>
<dbReference type="Pfam" id="PF00962">
    <property type="entry name" value="A_deaminase"/>
    <property type="match status" value="1"/>
</dbReference>
<dbReference type="SUPFAM" id="SSF51556">
    <property type="entry name" value="Metallo-dependent hydrolases"/>
    <property type="match status" value="1"/>
</dbReference>
<organism>
    <name type="scientific">Pseudomonas putida (strain W619)</name>
    <dbReference type="NCBI Taxonomy" id="390235"/>
    <lineage>
        <taxon>Bacteria</taxon>
        <taxon>Pseudomonadati</taxon>
        <taxon>Pseudomonadota</taxon>
        <taxon>Gammaproteobacteria</taxon>
        <taxon>Pseudomonadales</taxon>
        <taxon>Pseudomonadaceae</taxon>
        <taxon>Pseudomonas</taxon>
    </lineage>
</organism>
<accession>B1JFB0</accession>
<gene>
    <name type="ordered locus">PputW619_4572</name>
</gene>
<feature type="chain" id="PRO_1000128856" description="Adenine deaminase">
    <location>
        <begin position="1"/>
        <end position="315"/>
    </location>
</feature>
<feature type="active site" description="Proton donor" evidence="1">
    <location>
        <position position="197"/>
    </location>
</feature>
<feature type="binding site" evidence="1">
    <location>
        <position position="14"/>
    </location>
    <ligand>
        <name>Zn(2+)</name>
        <dbReference type="ChEBI" id="CHEBI:29105"/>
        <note>catalytic</note>
    </ligand>
</feature>
<feature type="binding site" evidence="1">
    <location>
        <position position="16"/>
    </location>
    <ligand>
        <name>Zn(2+)</name>
        <dbReference type="ChEBI" id="CHEBI:29105"/>
        <note>catalytic</note>
    </ligand>
</feature>
<feature type="binding site" evidence="1">
    <location>
        <position position="194"/>
    </location>
    <ligand>
        <name>Zn(2+)</name>
        <dbReference type="ChEBI" id="CHEBI:29105"/>
        <note>catalytic</note>
    </ligand>
</feature>
<feature type="binding site" evidence="1">
    <location>
        <position position="275"/>
    </location>
    <ligand>
        <name>Zn(2+)</name>
        <dbReference type="ChEBI" id="CHEBI:29105"/>
        <note>catalytic</note>
    </ligand>
</feature>
<feature type="binding site" evidence="1">
    <location>
        <position position="276"/>
    </location>
    <ligand>
        <name>substrate</name>
    </ligand>
</feature>
<feature type="site" description="Important for catalytic activity" evidence="1">
    <location>
        <position position="218"/>
    </location>
</feature>
<protein>
    <recommendedName>
        <fullName evidence="1">Adenine deaminase</fullName>
        <shortName evidence="1">ADE</shortName>
        <ecNumber evidence="1">3.5.4.2</ecNumber>
    </recommendedName>
    <alternativeName>
        <fullName evidence="1">Adenine aminohydrolase</fullName>
        <shortName evidence="1">AAH</shortName>
    </alternativeName>
</protein>
<reference key="1">
    <citation type="submission" date="2008-02" db="EMBL/GenBank/DDBJ databases">
        <title>Complete sequence of Pseudomonas putida W619.</title>
        <authorList>
            <person name="Copeland A."/>
            <person name="Lucas S."/>
            <person name="Lapidus A."/>
            <person name="Barry K."/>
            <person name="Detter J.C."/>
            <person name="Glavina del Rio T."/>
            <person name="Dalin E."/>
            <person name="Tice H."/>
            <person name="Pitluck S."/>
            <person name="Chain P."/>
            <person name="Malfatti S."/>
            <person name="Shin M."/>
            <person name="Vergez L."/>
            <person name="Schmutz J."/>
            <person name="Larimer F."/>
            <person name="Land M."/>
            <person name="Hauser L."/>
            <person name="Kyrpides N."/>
            <person name="Kim E."/>
            <person name="Taghavi S."/>
            <person name="Vangronsveld D."/>
            <person name="van der Lelie D."/>
            <person name="Richardson P."/>
        </authorList>
    </citation>
    <scope>NUCLEOTIDE SEQUENCE [LARGE SCALE GENOMIC DNA]</scope>
    <source>
        <strain>W619</strain>
    </source>
</reference>
<evidence type="ECO:0000255" key="1">
    <source>
        <dbReference type="HAMAP-Rule" id="MF_01962"/>
    </source>
</evidence>
<sequence length="315" mass="35999">MYEWLNALPKAELHLHLEGSLEPELLFALAERNKIALPWNDVEALRSAYAFNNLQEFLDLYYQGADVLRSEQDFYDLTWAYLQRCKSQNVIHTEPFFDPQTHTDRGIPFEVVLNGINQALKDGREQLGISSGLILSFLRHLSEEEAQKTLDQALPFRDAFIAVGLDSSEKGHPPSKFQRVFDRARSEGFEAVAHAGEEGPPEYIWEALDLLKIKRIDHGVRAIEDERLMQRIIDEQIPLTVCPLSNTKLCVFDHMSQHNILDMLERGVKVTVNSDDPAYFGGYVTENFHALHTHLGMTEDQARRLAQNSLDARLV</sequence>
<proteinExistence type="inferred from homology"/>
<comment type="function">
    <text evidence="1">Catalyzes the hydrolytic deamination of adenine to hypoxanthine. Plays an important role in the purine salvage pathway and in nitrogen catabolism.</text>
</comment>
<comment type="catalytic activity">
    <reaction evidence="1">
        <text>adenine + H2O + H(+) = hypoxanthine + NH4(+)</text>
        <dbReference type="Rhea" id="RHEA:23688"/>
        <dbReference type="ChEBI" id="CHEBI:15377"/>
        <dbReference type="ChEBI" id="CHEBI:15378"/>
        <dbReference type="ChEBI" id="CHEBI:16708"/>
        <dbReference type="ChEBI" id="CHEBI:17368"/>
        <dbReference type="ChEBI" id="CHEBI:28938"/>
        <dbReference type="EC" id="3.5.4.2"/>
    </reaction>
</comment>
<comment type="cofactor">
    <cofactor evidence="1">
        <name>Zn(2+)</name>
        <dbReference type="ChEBI" id="CHEBI:29105"/>
    </cofactor>
    <text evidence="1">Binds 1 zinc ion per subunit.</text>
</comment>
<comment type="similarity">
    <text evidence="1">Belongs to the metallo-dependent hydrolases superfamily. Adenosine and AMP deaminases family. Adenine deaminase type 2 subfamily.</text>
</comment>